<accession>B6ENR6</accession>
<evidence type="ECO:0000255" key="1">
    <source>
        <dbReference type="HAMAP-Rule" id="MF_01318"/>
    </source>
</evidence>
<evidence type="ECO:0000305" key="2"/>
<proteinExistence type="inferred from homology"/>
<name>RL1_ALISL</name>
<reference key="1">
    <citation type="journal article" date="2008" name="BMC Genomics">
        <title>The genome sequence of the fish pathogen Aliivibrio salmonicida strain LFI1238 shows extensive evidence of gene decay.</title>
        <authorList>
            <person name="Hjerde E."/>
            <person name="Lorentzen M.S."/>
            <person name="Holden M.T."/>
            <person name="Seeger K."/>
            <person name="Paulsen S."/>
            <person name="Bason N."/>
            <person name="Churcher C."/>
            <person name="Harris D."/>
            <person name="Norbertczak H."/>
            <person name="Quail M.A."/>
            <person name="Sanders S."/>
            <person name="Thurston S."/>
            <person name="Parkhill J."/>
            <person name="Willassen N.P."/>
            <person name="Thomson N.R."/>
        </authorList>
    </citation>
    <scope>NUCLEOTIDE SEQUENCE [LARGE SCALE GENOMIC DNA]</scope>
    <source>
        <strain>LFI1238</strain>
    </source>
</reference>
<gene>
    <name evidence="1" type="primary">rplA</name>
    <name type="ordered locus">VSAL_I2869</name>
</gene>
<dbReference type="EMBL" id="FM178379">
    <property type="protein sequence ID" value="CAQ80553.1"/>
    <property type="molecule type" value="Genomic_DNA"/>
</dbReference>
<dbReference type="RefSeq" id="WP_012551291.1">
    <property type="nucleotide sequence ID" value="NC_011312.1"/>
</dbReference>
<dbReference type="SMR" id="B6ENR6"/>
<dbReference type="KEGG" id="vsa:VSAL_I2869"/>
<dbReference type="eggNOG" id="COG0081">
    <property type="taxonomic scope" value="Bacteria"/>
</dbReference>
<dbReference type="HOGENOM" id="CLU_062853_0_0_6"/>
<dbReference type="Proteomes" id="UP000001730">
    <property type="component" value="Chromosome 1"/>
</dbReference>
<dbReference type="GO" id="GO:0022625">
    <property type="term" value="C:cytosolic large ribosomal subunit"/>
    <property type="evidence" value="ECO:0007669"/>
    <property type="project" value="TreeGrafter"/>
</dbReference>
<dbReference type="GO" id="GO:0019843">
    <property type="term" value="F:rRNA binding"/>
    <property type="evidence" value="ECO:0007669"/>
    <property type="project" value="UniProtKB-UniRule"/>
</dbReference>
<dbReference type="GO" id="GO:0003735">
    <property type="term" value="F:structural constituent of ribosome"/>
    <property type="evidence" value="ECO:0007669"/>
    <property type="project" value="InterPro"/>
</dbReference>
<dbReference type="GO" id="GO:0000049">
    <property type="term" value="F:tRNA binding"/>
    <property type="evidence" value="ECO:0007669"/>
    <property type="project" value="UniProtKB-KW"/>
</dbReference>
<dbReference type="GO" id="GO:0006417">
    <property type="term" value="P:regulation of translation"/>
    <property type="evidence" value="ECO:0007669"/>
    <property type="project" value="UniProtKB-KW"/>
</dbReference>
<dbReference type="GO" id="GO:0006412">
    <property type="term" value="P:translation"/>
    <property type="evidence" value="ECO:0007669"/>
    <property type="project" value="UniProtKB-UniRule"/>
</dbReference>
<dbReference type="CDD" id="cd00403">
    <property type="entry name" value="Ribosomal_L1"/>
    <property type="match status" value="1"/>
</dbReference>
<dbReference type="FunFam" id="3.40.50.790:FF:000001">
    <property type="entry name" value="50S ribosomal protein L1"/>
    <property type="match status" value="1"/>
</dbReference>
<dbReference type="Gene3D" id="3.30.190.20">
    <property type="match status" value="1"/>
</dbReference>
<dbReference type="Gene3D" id="3.40.50.790">
    <property type="match status" value="1"/>
</dbReference>
<dbReference type="HAMAP" id="MF_01318_B">
    <property type="entry name" value="Ribosomal_uL1_B"/>
    <property type="match status" value="1"/>
</dbReference>
<dbReference type="InterPro" id="IPR005878">
    <property type="entry name" value="Ribosom_uL1_bac-type"/>
</dbReference>
<dbReference type="InterPro" id="IPR002143">
    <property type="entry name" value="Ribosomal_uL1"/>
</dbReference>
<dbReference type="InterPro" id="IPR023674">
    <property type="entry name" value="Ribosomal_uL1-like"/>
</dbReference>
<dbReference type="InterPro" id="IPR028364">
    <property type="entry name" value="Ribosomal_uL1/biogenesis"/>
</dbReference>
<dbReference type="InterPro" id="IPR016095">
    <property type="entry name" value="Ribosomal_uL1_3-a/b-sand"/>
</dbReference>
<dbReference type="InterPro" id="IPR023673">
    <property type="entry name" value="Ribosomal_uL1_CS"/>
</dbReference>
<dbReference type="NCBIfam" id="TIGR01169">
    <property type="entry name" value="rplA_bact"/>
    <property type="match status" value="1"/>
</dbReference>
<dbReference type="PANTHER" id="PTHR36427">
    <property type="entry name" value="54S RIBOSOMAL PROTEIN L1, MITOCHONDRIAL"/>
    <property type="match status" value="1"/>
</dbReference>
<dbReference type="PANTHER" id="PTHR36427:SF3">
    <property type="entry name" value="LARGE RIBOSOMAL SUBUNIT PROTEIN UL1M"/>
    <property type="match status" value="1"/>
</dbReference>
<dbReference type="Pfam" id="PF00687">
    <property type="entry name" value="Ribosomal_L1"/>
    <property type="match status" value="1"/>
</dbReference>
<dbReference type="PIRSF" id="PIRSF002155">
    <property type="entry name" value="Ribosomal_L1"/>
    <property type="match status" value="1"/>
</dbReference>
<dbReference type="SUPFAM" id="SSF56808">
    <property type="entry name" value="Ribosomal protein L1"/>
    <property type="match status" value="1"/>
</dbReference>
<dbReference type="PROSITE" id="PS01199">
    <property type="entry name" value="RIBOSOMAL_L1"/>
    <property type="match status" value="1"/>
</dbReference>
<comment type="function">
    <text evidence="1">Binds directly to 23S rRNA. The L1 stalk is quite mobile in the ribosome, and is involved in E site tRNA release.</text>
</comment>
<comment type="function">
    <text evidence="1">Protein L1 is also a translational repressor protein, it controls the translation of the L11 operon by binding to its mRNA.</text>
</comment>
<comment type="subunit">
    <text evidence="1">Part of the 50S ribosomal subunit.</text>
</comment>
<comment type="similarity">
    <text evidence="1">Belongs to the universal ribosomal protein uL1 family.</text>
</comment>
<organism>
    <name type="scientific">Aliivibrio salmonicida (strain LFI1238)</name>
    <name type="common">Vibrio salmonicida (strain LFI1238)</name>
    <dbReference type="NCBI Taxonomy" id="316275"/>
    <lineage>
        <taxon>Bacteria</taxon>
        <taxon>Pseudomonadati</taxon>
        <taxon>Pseudomonadota</taxon>
        <taxon>Gammaproteobacteria</taxon>
        <taxon>Vibrionales</taxon>
        <taxon>Vibrionaceae</taxon>
        <taxon>Aliivibrio</taxon>
    </lineage>
</organism>
<keyword id="KW-0678">Repressor</keyword>
<keyword id="KW-0687">Ribonucleoprotein</keyword>
<keyword id="KW-0689">Ribosomal protein</keyword>
<keyword id="KW-0694">RNA-binding</keyword>
<keyword id="KW-0699">rRNA-binding</keyword>
<keyword id="KW-0810">Translation regulation</keyword>
<keyword id="KW-0820">tRNA-binding</keyword>
<feature type="chain" id="PRO_1000141352" description="Large ribosomal subunit protein uL1">
    <location>
        <begin position="1"/>
        <end position="234"/>
    </location>
</feature>
<sequence>MTKLTKRMRNIREKVEVTKDYEINEAIALLKELATANFNESVDVAVNLGIDARKSDQNVRGATVLPHGTGRNVRVAVFTQGANAEAAKEAGADLVGMEDLAELVKKGEMNFDVVVASPDAMRVVGQLGTILGPRGLMPNPKVGTVTPNVAQAVKNAKAGQVRYRNDKNGIIHTTIGKVDFDGAQLKENLESLLVALKKAKPTSAKGVFLKKVSISTTMGAGVSLDQSTLETTTK</sequence>
<protein>
    <recommendedName>
        <fullName evidence="1">Large ribosomal subunit protein uL1</fullName>
    </recommendedName>
    <alternativeName>
        <fullName evidence="2">50S ribosomal protein L1</fullName>
    </alternativeName>
</protein>